<name>RL20_AZOVD</name>
<reference key="1">
    <citation type="journal article" date="2009" name="J. Bacteriol.">
        <title>Genome sequence of Azotobacter vinelandii, an obligate aerobe specialized to support diverse anaerobic metabolic processes.</title>
        <authorList>
            <person name="Setubal J.C."/>
            <person name="Dos Santos P."/>
            <person name="Goldman B.S."/>
            <person name="Ertesvaag H."/>
            <person name="Espin G."/>
            <person name="Rubio L.M."/>
            <person name="Valla S."/>
            <person name="Almeida N.F."/>
            <person name="Balasubramanian D."/>
            <person name="Cromes L."/>
            <person name="Curatti L."/>
            <person name="Du Z."/>
            <person name="Godsy E."/>
            <person name="Goodner B."/>
            <person name="Hellner-Burris K."/>
            <person name="Hernandez J.A."/>
            <person name="Houmiel K."/>
            <person name="Imperial J."/>
            <person name="Kennedy C."/>
            <person name="Larson T.J."/>
            <person name="Latreille P."/>
            <person name="Ligon L.S."/>
            <person name="Lu J."/>
            <person name="Maerk M."/>
            <person name="Miller N.M."/>
            <person name="Norton S."/>
            <person name="O'Carroll I.P."/>
            <person name="Paulsen I."/>
            <person name="Raulfs E.C."/>
            <person name="Roemer R."/>
            <person name="Rosser J."/>
            <person name="Segura D."/>
            <person name="Slater S."/>
            <person name="Stricklin S.L."/>
            <person name="Studholme D.J."/>
            <person name="Sun J."/>
            <person name="Viana C.J."/>
            <person name="Wallin E."/>
            <person name="Wang B."/>
            <person name="Wheeler C."/>
            <person name="Zhu H."/>
            <person name="Dean D.R."/>
            <person name="Dixon R."/>
            <person name="Wood D."/>
        </authorList>
    </citation>
    <scope>NUCLEOTIDE SEQUENCE [LARGE SCALE GENOMIC DNA]</scope>
    <source>
        <strain>DJ / ATCC BAA-1303</strain>
    </source>
</reference>
<accession>C1DF45</accession>
<sequence>MARVKRGVIARRRHKKILKLAKGYYGARSRVFRVAKQAVIKAGQYAYRDRRQRKRQFRALWIARINAGARQNGLSYSRLIAGLKKATIEIDRKVLSDLAVNEKAAFAAIVEKAKAVLA</sequence>
<protein>
    <recommendedName>
        <fullName evidence="1">Large ribosomal subunit protein bL20</fullName>
    </recommendedName>
    <alternativeName>
        <fullName evidence="2">50S ribosomal protein L20</fullName>
    </alternativeName>
</protein>
<evidence type="ECO:0000255" key="1">
    <source>
        <dbReference type="HAMAP-Rule" id="MF_00382"/>
    </source>
</evidence>
<evidence type="ECO:0000305" key="2"/>
<gene>
    <name evidence="1" type="primary">rplT</name>
    <name type="ordered locus">Avin_20450</name>
</gene>
<feature type="chain" id="PRO_1000205701" description="Large ribosomal subunit protein bL20">
    <location>
        <begin position="1"/>
        <end position="118"/>
    </location>
</feature>
<keyword id="KW-0687">Ribonucleoprotein</keyword>
<keyword id="KW-0689">Ribosomal protein</keyword>
<keyword id="KW-0694">RNA-binding</keyword>
<keyword id="KW-0699">rRNA-binding</keyword>
<organism>
    <name type="scientific">Azotobacter vinelandii (strain DJ / ATCC BAA-1303)</name>
    <dbReference type="NCBI Taxonomy" id="322710"/>
    <lineage>
        <taxon>Bacteria</taxon>
        <taxon>Pseudomonadati</taxon>
        <taxon>Pseudomonadota</taxon>
        <taxon>Gammaproteobacteria</taxon>
        <taxon>Pseudomonadales</taxon>
        <taxon>Pseudomonadaceae</taxon>
        <taxon>Azotobacter</taxon>
    </lineage>
</organism>
<comment type="function">
    <text evidence="1">Binds directly to 23S ribosomal RNA and is necessary for the in vitro assembly process of the 50S ribosomal subunit. It is not involved in the protein synthesizing functions of that subunit.</text>
</comment>
<comment type="similarity">
    <text evidence="1">Belongs to the bacterial ribosomal protein bL20 family.</text>
</comment>
<dbReference type="EMBL" id="CP001157">
    <property type="protein sequence ID" value="ACO78248.1"/>
    <property type="molecule type" value="Genomic_DNA"/>
</dbReference>
<dbReference type="RefSeq" id="WP_012700657.1">
    <property type="nucleotide sequence ID" value="NC_012560.1"/>
</dbReference>
<dbReference type="SMR" id="C1DF45"/>
<dbReference type="STRING" id="322710.Avin_20450"/>
<dbReference type="EnsemblBacteria" id="ACO78248">
    <property type="protein sequence ID" value="ACO78248"/>
    <property type="gene ID" value="Avin_20450"/>
</dbReference>
<dbReference type="GeneID" id="88185276"/>
<dbReference type="KEGG" id="avn:Avin_20450"/>
<dbReference type="eggNOG" id="COG0292">
    <property type="taxonomic scope" value="Bacteria"/>
</dbReference>
<dbReference type="HOGENOM" id="CLU_123265_0_1_6"/>
<dbReference type="OrthoDB" id="9808966at2"/>
<dbReference type="Proteomes" id="UP000002424">
    <property type="component" value="Chromosome"/>
</dbReference>
<dbReference type="GO" id="GO:1990904">
    <property type="term" value="C:ribonucleoprotein complex"/>
    <property type="evidence" value="ECO:0007669"/>
    <property type="project" value="UniProtKB-KW"/>
</dbReference>
<dbReference type="GO" id="GO:0005840">
    <property type="term" value="C:ribosome"/>
    <property type="evidence" value="ECO:0007669"/>
    <property type="project" value="UniProtKB-KW"/>
</dbReference>
<dbReference type="GO" id="GO:0019843">
    <property type="term" value="F:rRNA binding"/>
    <property type="evidence" value="ECO:0007669"/>
    <property type="project" value="UniProtKB-UniRule"/>
</dbReference>
<dbReference type="GO" id="GO:0003735">
    <property type="term" value="F:structural constituent of ribosome"/>
    <property type="evidence" value="ECO:0007669"/>
    <property type="project" value="InterPro"/>
</dbReference>
<dbReference type="GO" id="GO:0000027">
    <property type="term" value="P:ribosomal large subunit assembly"/>
    <property type="evidence" value="ECO:0007669"/>
    <property type="project" value="UniProtKB-UniRule"/>
</dbReference>
<dbReference type="GO" id="GO:0006412">
    <property type="term" value="P:translation"/>
    <property type="evidence" value="ECO:0007669"/>
    <property type="project" value="InterPro"/>
</dbReference>
<dbReference type="CDD" id="cd07026">
    <property type="entry name" value="Ribosomal_L20"/>
    <property type="match status" value="1"/>
</dbReference>
<dbReference type="FunFam" id="1.10.1900.20:FF:000001">
    <property type="entry name" value="50S ribosomal protein L20"/>
    <property type="match status" value="1"/>
</dbReference>
<dbReference type="Gene3D" id="6.10.160.10">
    <property type="match status" value="1"/>
</dbReference>
<dbReference type="Gene3D" id="1.10.1900.20">
    <property type="entry name" value="Ribosomal protein L20"/>
    <property type="match status" value="1"/>
</dbReference>
<dbReference type="HAMAP" id="MF_00382">
    <property type="entry name" value="Ribosomal_bL20"/>
    <property type="match status" value="1"/>
</dbReference>
<dbReference type="InterPro" id="IPR005813">
    <property type="entry name" value="Ribosomal_bL20"/>
</dbReference>
<dbReference type="InterPro" id="IPR049946">
    <property type="entry name" value="RIBOSOMAL_L20_CS"/>
</dbReference>
<dbReference type="InterPro" id="IPR035566">
    <property type="entry name" value="Ribosomal_protein_bL20_C"/>
</dbReference>
<dbReference type="NCBIfam" id="TIGR01032">
    <property type="entry name" value="rplT_bact"/>
    <property type="match status" value="1"/>
</dbReference>
<dbReference type="PANTHER" id="PTHR10986">
    <property type="entry name" value="39S RIBOSOMAL PROTEIN L20"/>
    <property type="match status" value="1"/>
</dbReference>
<dbReference type="Pfam" id="PF00453">
    <property type="entry name" value="Ribosomal_L20"/>
    <property type="match status" value="1"/>
</dbReference>
<dbReference type="PRINTS" id="PR00062">
    <property type="entry name" value="RIBOSOMALL20"/>
</dbReference>
<dbReference type="SUPFAM" id="SSF74731">
    <property type="entry name" value="Ribosomal protein L20"/>
    <property type="match status" value="1"/>
</dbReference>
<dbReference type="PROSITE" id="PS00937">
    <property type="entry name" value="RIBOSOMAL_L20"/>
    <property type="match status" value="1"/>
</dbReference>
<proteinExistence type="inferred from homology"/>